<dbReference type="EC" id="1.-.-.-"/>
<dbReference type="EMBL" id="AE000516">
    <property type="protein sequence ID" value="AAK46640.1"/>
    <property type="molecule type" value="Genomic_DNA"/>
</dbReference>
<dbReference type="PIR" id="F70733">
    <property type="entry name" value="F70733"/>
</dbReference>
<dbReference type="RefSeq" id="WP_003902161.1">
    <property type="nucleotide sequence ID" value="NZ_KK341227.1"/>
</dbReference>
<dbReference type="SMR" id="P9WQA6"/>
<dbReference type="KEGG" id="mtc:MT2355"/>
<dbReference type="PATRIC" id="fig|83331.31.peg.2535"/>
<dbReference type="HOGENOM" id="CLU_023205_2_3_11"/>
<dbReference type="Proteomes" id="UP000001020">
    <property type="component" value="Chromosome"/>
</dbReference>
<dbReference type="GO" id="GO:0016491">
    <property type="term" value="F:oxidoreductase activity"/>
    <property type="evidence" value="ECO:0007669"/>
    <property type="project" value="UniProtKB-KW"/>
</dbReference>
<dbReference type="CDD" id="cd19093">
    <property type="entry name" value="AKR_AtPLR-like"/>
    <property type="match status" value="1"/>
</dbReference>
<dbReference type="Gene3D" id="3.20.20.100">
    <property type="entry name" value="NADP-dependent oxidoreductase domain"/>
    <property type="match status" value="1"/>
</dbReference>
<dbReference type="InterPro" id="IPR050523">
    <property type="entry name" value="AKR_Detox_Biosynth"/>
</dbReference>
<dbReference type="InterPro" id="IPR023210">
    <property type="entry name" value="NADP_OxRdtase_dom"/>
</dbReference>
<dbReference type="InterPro" id="IPR036812">
    <property type="entry name" value="NADP_OxRdtase_dom_sf"/>
</dbReference>
<dbReference type="PANTHER" id="PTHR43364:SF4">
    <property type="entry name" value="NAD(P)-LINKED OXIDOREDUCTASE SUPERFAMILY PROTEIN"/>
    <property type="match status" value="1"/>
</dbReference>
<dbReference type="PANTHER" id="PTHR43364">
    <property type="entry name" value="NADH-SPECIFIC METHYLGLYOXAL REDUCTASE-RELATED"/>
    <property type="match status" value="1"/>
</dbReference>
<dbReference type="Pfam" id="PF00248">
    <property type="entry name" value="Aldo_ket_red"/>
    <property type="match status" value="1"/>
</dbReference>
<dbReference type="SUPFAM" id="SSF51430">
    <property type="entry name" value="NAD(P)-linked oxidoreductase"/>
    <property type="match status" value="1"/>
</dbReference>
<sequence>MKYLDVDGIGQVSRIGLGTWQFGSREWGYGDRYATGAARDIVKRARALGVTLFDTAEIYGLGKSERILGEALGDDRTEVVVASKVFPVAPFPAVIKNRERASARRLQLNRIPLYQIHQPNPVVPDSVIMPGMRDLLDSGDIGAAGVSNYSLARWRKADAALGRPVVSNQVHFSLAHPDALEDLVPFAELENRIVIAYSPLAQGLLGGKYGLENRPGGVRALNPLFGTENLRRIEPLLATLRAIAVDVDAKPAQVALAWLISLPGVVAIPGASSVEQLEFNVAAADIELSAQSRDALTDAARAFRPVSTGRFLTDMVREKVSRR</sequence>
<feature type="chain" id="PRO_0000426809" description="Uncharacterized oxidoreductase MT2355">
    <location>
        <begin position="1"/>
        <end position="323"/>
    </location>
</feature>
<feature type="active site" description="Proton donor" evidence="1">
    <location>
        <position position="59"/>
    </location>
</feature>
<feature type="binding site" evidence="1">
    <location>
        <begin position="198"/>
        <end position="208"/>
    </location>
    <ligand>
        <name>NADP(+)</name>
        <dbReference type="ChEBI" id="CHEBI:58349"/>
    </ligand>
</feature>
<name>Y2298_MYCTO</name>
<comment type="similarity">
    <text evidence="2">Belongs to the aldo/keto reductase family. Aldo/keto reductase 2 subfamily.</text>
</comment>
<gene>
    <name type="ordered locus">MT2355</name>
</gene>
<protein>
    <recommendedName>
        <fullName>Uncharacterized oxidoreductase MT2355</fullName>
        <ecNumber>1.-.-.-</ecNumber>
    </recommendedName>
</protein>
<evidence type="ECO:0000250" key="1"/>
<evidence type="ECO:0000305" key="2"/>
<proteinExistence type="inferred from homology"/>
<reference key="1">
    <citation type="journal article" date="2002" name="J. Bacteriol.">
        <title>Whole-genome comparison of Mycobacterium tuberculosis clinical and laboratory strains.</title>
        <authorList>
            <person name="Fleischmann R.D."/>
            <person name="Alland D."/>
            <person name="Eisen J.A."/>
            <person name="Carpenter L."/>
            <person name="White O."/>
            <person name="Peterson J.D."/>
            <person name="DeBoy R.T."/>
            <person name="Dodson R.J."/>
            <person name="Gwinn M.L."/>
            <person name="Haft D.H."/>
            <person name="Hickey E.K."/>
            <person name="Kolonay J.F."/>
            <person name="Nelson W.C."/>
            <person name="Umayam L.A."/>
            <person name="Ermolaeva M.D."/>
            <person name="Salzberg S.L."/>
            <person name="Delcher A."/>
            <person name="Utterback T.R."/>
            <person name="Weidman J.F."/>
            <person name="Khouri H.M."/>
            <person name="Gill J."/>
            <person name="Mikula A."/>
            <person name="Bishai W."/>
            <person name="Jacobs W.R. Jr."/>
            <person name="Venter J.C."/>
            <person name="Fraser C.M."/>
        </authorList>
    </citation>
    <scope>NUCLEOTIDE SEQUENCE [LARGE SCALE GENOMIC DNA]</scope>
    <source>
        <strain>CDC 1551 / Oshkosh</strain>
    </source>
</reference>
<organism>
    <name type="scientific">Mycobacterium tuberculosis (strain CDC 1551 / Oshkosh)</name>
    <dbReference type="NCBI Taxonomy" id="83331"/>
    <lineage>
        <taxon>Bacteria</taxon>
        <taxon>Bacillati</taxon>
        <taxon>Actinomycetota</taxon>
        <taxon>Actinomycetes</taxon>
        <taxon>Mycobacteriales</taxon>
        <taxon>Mycobacteriaceae</taxon>
        <taxon>Mycobacterium</taxon>
        <taxon>Mycobacterium tuberculosis complex</taxon>
    </lineage>
</organism>
<keyword id="KW-0521">NADP</keyword>
<keyword id="KW-0560">Oxidoreductase</keyword>
<keyword id="KW-1185">Reference proteome</keyword>
<accession>P9WQA6</accession>
<accession>L0T9E3</accession>
<accession>P63484</accession>
<accession>Q50668</accession>